<gene>
    <name type="primary">acbp-1</name>
    <name type="ORF">C44E4.6</name>
</gene>
<accession>O01805</accession>
<reference key="1">
    <citation type="journal article" date="1998" name="Science">
        <title>Genome sequence of the nematode C. elegans: a platform for investigating biology.</title>
        <authorList>
            <consortium name="The C. elegans sequencing consortium"/>
        </authorList>
    </citation>
    <scope>NUCLEOTIDE SEQUENCE [LARGE SCALE GENOMIC DNA]</scope>
    <source>
        <strain>Bristol N2</strain>
    </source>
</reference>
<evidence type="ECO:0000250" key="1"/>
<evidence type="ECO:0000255" key="2">
    <source>
        <dbReference type="PROSITE-ProRule" id="PRU00573"/>
    </source>
</evidence>
<evidence type="ECO:0000305" key="3"/>
<keyword id="KW-0446">Lipid-binding</keyword>
<keyword id="KW-1185">Reference proteome</keyword>
<keyword id="KW-0813">Transport</keyword>
<organism>
    <name type="scientific">Caenorhabditis elegans</name>
    <dbReference type="NCBI Taxonomy" id="6239"/>
    <lineage>
        <taxon>Eukaryota</taxon>
        <taxon>Metazoa</taxon>
        <taxon>Ecdysozoa</taxon>
        <taxon>Nematoda</taxon>
        <taxon>Chromadorea</taxon>
        <taxon>Rhabditida</taxon>
        <taxon>Rhabditina</taxon>
        <taxon>Rhabditomorpha</taxon>
        <taxon>Rhabditoidea</taxon>
        <taxon>Rhabditidae</taxon>
        <taxon>Peloderinae</taxon>
        <taxon>Caenorhabditis</taxon>
    </lineage>
</organism>
<proteinExistence type="inferred from homology"/>
<dbReference type="EMBL" id="FO080862">
    <property type="protein sequence ID" value="CCD67306.1"/>
    <property type="molecule type" value="Genomic_DNA"/>
</dbReference>
<dbReference type="PIR" id="T30954">
    <property type="entry name" value="T30954"/>
</dbReference>
<dbReference type="RefSeq" id="NP_491412.1">
    <property type="nucleotide sequence ID" value="NM_059011.8"/>
</dbReference>
<dbReference type="SMR" id="O01805"/>
<dbReference type="BioGRID" id="37535">
    <property type="interactions" value="44"/>
</dbReference>
<dbReference type="FunCoup" id="O01805">
    <property type="interactions" value="596"/>
</dbReference>
<dbReference type="STRING" id="6239.C44E4.6.3"/>
<dbReference type="iPTMnet" id="O01805"/>
<dbReference type="PaxDb" id="6239-C44E4.6.1"/>
<dbReference type="PeptideAtlas" id="O01805"/>
<dbReference type="EnsemblMetazoa" id="C44E4.6.1">
    <property type="protein sequence ID" value="C44E4.6.1"/>
    <property type="gene ID" value="WBGene00016655"/>
</dbReference>
<dbReference type="EnsemblMetazoa" id="C44E4.6.2">
    <property type="protein sequence ID" value="C44E4.6.2"/>
    <property type="gene ID" value="WBGene00016655"/>
</dbReference>
<dbReference type="GeneID" id="172071"/>
<dbReference type="KEGG" id="cel:CELE_C44E4.6"/>
<dbReference type="UCSC" id="C44E4.6.1">
    <property type="organism name" value="c. elegans"/>
</dbReference>
<dbReference type="AGR" id="WB:WBGene00016655"/>
<dbReference type="CTD" id="172071"/>
<dbReference type="WormBase" id="C44E4.6">
    <property type="protein sequence ID" value="CE08720"/>
    <property type="gene ID" value="WBGene00016655"/>
    <property type="gene designation" value="acbp-1"/>
</dbReference>
<dbReference type="eggNOG" id="KOG0817">
    <property type="taxonomic scope" value="Eukaryota"/>
</dbReference>
<dbReference type="GeneTree" id="ENSGT00940000173845"/>
<dbReference type="HOGENOM" id="CLU_118853_4_1_1"/>
<dbReference type="InParanoid" id="O01805"/>
<dbReference type="OMA" id="YFYKYYK"/>
<dbReference type="OrthoDB" id="346910at2759"/>
<dbReference type="PhylomeDB" id="O01805"/>
<dbReference type="PRO" id="PR:O01805"/>
<dbReference type="Proteomes" id="UP000001940">
    <property type="component" value="Chromosome I"/>
</dbReference>
<dbReference type="Bgee" id="WBGene00016655">
    <property type="expression patterns" value="Expressed in adult organism and 3 other cell types or tissues"/>
</dbReference>
<dbReference type="GO" id="GO:0000062">
    <property type="term" value="F:fatty-acyl-CoA binding"/>
    <property type="evidence" value="ECO:0000318"/>
    <property type="project" value="GO_Central"/>
</dbReference>
<dbReference type="GO" id="GO:0008340">
    <property type="term" value="P:determination of adult lifespan"/>
    <property type="evidence" value="ECO:0000315"/>
    <property type="project" value="WormBase"/>
</dbReference>
<dbReference type="GO" id="GO:0006631">
    <property type="term" value="P:fatty acid metabolic process"/>
    <property type="evidence" value="ECO:0000318"/>
    <property type="project" value="GO_Central"/>
</dbReference>
<dbReference type="GO" id="GO:0019915">
    <property type="term" value="P:lipid storage"/>
    <property type="evidence" value="ECO:0000315"/>
    <property type="project" value="WormBase"/>
</dbReference>
<dbReference type="CDD" id="cd00435">
    <property type="entry name" value="ACBP"/>
    <property type="match status" value="1"/>
</dbReference>
<dbReference type="FunFam" id="1.20.80.10:FF:000010">
    <property type="entry name" value="Acyl-CoA-binding domain-containing protein 5"/>
    <property type="match status" value="1"/>
</dbReference>
<dbReference type="Gene3D" id="1.20.80.10">
    <property type="match status" value="1"/>
</dbReference>
<dbReference type="InterPro" id="IPR022408">
    <property type="entry name" value="Acyl-CoA-binding_prot_CS"/>
</dbReference>
<dbReference type="InterPro" id="IPR000582">
    <property type="entry name" value="Acyl-CoA-binding_protein"/>
</dbReference>
<dbReference type="InterPro" id="IPR035984">
    <property type="entry name" value="Acyl-CoA-binding_sf"/>
</dbReference>
<dbReference type="InterPro" id="IPR014352">
    <property type="entry name" value="FERM/acyl-CoA-bd_prot_sf"/>
</dbReference>
<dbReference type="PANTHER" id="PTHR23310:SF62">
    <property type="entry name" value="ACYL-COA BINDING PROTEIN 1, ISOFORM A"/>
    <property type="match status" value="1"/>
</dbReference>
<dbReference type="PANTHER" id="PTHR23310">
    <property type="entry name" value="ACYL-COA-BINDING PROTEIN, ACBP"/>
    <property type="match status" value="1"/>
</dbReference>
<dbReference type="Pfam" id="PF00887">
    <property type="entry name" value="ACBP"/>
    <property type="match status" value="1"/>
</dbReference>
<dbReference type="PRINTS" id="PR00689">
    <property type="entry name" value="ACOABINDINGP"/>
</dbReference>
<dbReference type="SUPFAM" id="SSF47027">
    <property type="entry name" value="Acyl-CoA binding protein"/>
    <property type="match status" value="1"/>
</dbReference>
<dbReference type="PROSITE" id="PS00880">
    <property type="entry name" value="ACB_1"/>
    <property type="match status" value="1"/>
</dbReference>
<dbReference type="PROSITE" id="PS51228">
    <property type="entry name" value="ACB_2"/>
    <property type="match status" value="1"/>
</dbReference>
<comment type="function">
    <text evidence="1">Binds medium- and long-chain acyl-CoA esters with very high affinity and may function as an intracellular carrier of acyl-CoA esters.</text>
</comment>
<comment type="similarity">
    <text evidence="3">Belongs to the ACBP family.</text>
</comment>
<feature type="chain" id="PRO_0000214012" description="Acyl-CoA-binding protein homolog 1">
    <location>
        <begin position="1"/>
        <end position="86"/>
    </location>
</feature>
<feature type="domain" description="ACB" evidence="2">
    <location>
        <begin position="1"/>
        <end position="86"/>
    </location>
</feature>
<feature type="binding site" evidence="1">
    <location>
        <position position="13"/>
    </location>
    <ligand>
        <name>an acyl-CoA</name>
        <dbReference type="ChEBI" id="CHEBI:58342"/>
    </ligand>
</feature>
<feature type="binding site" evidence="1">
    <location>
        <begin position="28"/>
        <end position="32"/>
    </location>
    <ligand>
        <name>an acyl-CoA</name>
        <dbReference type="ChEBI" id="CHEBI:58342"/>
    </ligand>
</feature>
<feature type="binding site" evidence="1">
    <location>
        <position position="50"/>
    </location>
    <ligand>
        <name>an acyl-CoA</name>
        <dbReference type="ChEBI" id="CHEBI:58342"/>
    </ligand>
</feature>
<feature type="binding site" evidence="1">
    <location>
        <position position="54"/>
    </location>
    <ligand>
        <name>an acyl-CoA</name>
        <dbReference type="ChEBI" id="CHEBI:58342"/>
    </ligand>
</feature>
<feature type="binding site" evidence="1">
    <location>
        <position position="73"/>
    </location>
    <ligand>
        <name>an acyl-CoA</name>
        <dbReference type="ChEBI" id="CHEBI:58342"/>
    </ligand>
</feature>
<sequence>MTLSFDDAAATVKTLKTSPSNDELLKLYALFKQGTVGDNTTDKPGMFDLKGKAKWSAWDEKKGLAKDDAQKAYVALVEELIAKYGA</sequence>
<name>ACBP1_CAEEL</name>
<protein>
    <recommendedName>
        <fullName>Acyl-CoA-binding protein homolog 1</fullName>
        <shortName>ACBP-1</shortName>
    </recommendedName>
    <alternativeName>
        <fullName>Diazepam-binding inhibitor homolog</fullName>
        <shortName>DBI</shortName>
    </alternativeName>
</protein>